<keyword id="KW-0007">Acetylation</keyword>
<keyword id="KW-0067">ATP-binding</keyword>
<keyword id="KW-0436">Ligase</keyword>
<keyword id="KW-0460">Magnesium</keyword>
<keyword id="KW-0479">Metal-binding</keyword>
<keyword id="KW-0547">Nucleotide-binding</keyword>
<keyword id="KW-1185">Reference proteome</keyword>
<feature type="chain" id="PRO_0000208376" description="Acetyl-coenzyme A synthetase 1">
    <location>
        <begin position="1"/>
        <end position="653"/>
    </location>
</feature>
<feature type="binding site" evidence="1">
    <location>
        <begin position="191"/>
        <end position="194"/>
    </location>
    <ligand>
        <name>CoA</name>
        <dbReference type="ChEBI" id="CHEBI:57287"/>
    </ligand>
</feature>
<feature type="binding site" evidence="1">
    <location>
        <position position="311"/>
    </location>
    <ligand>
        <name>CoA</name>
        <dbReference type="ChEBI" id="CHEBI:57287"/>
    </ligand>
</feature>
<feature type="binding site" evidence="1">
    <location>
        <position position="335"/>
    </location>
    <ligand>
        <name>CoA</name>
        <dbReference type="ChEBI" id="CHEBI:57287"/>
    </ligand>
</feature>
<feature type="binding site" evidence="1">
    <location>
        <begin position="387"/>
        <end position="389"/>
    </location>
    <ligand>
        <name>ATP</name>
        <dbReference type="ChEBI" id="CHEBI:30616"/>
    </ligand>
</feature>
<feature type="binding site" evidence="1">
    <location>
        <begin position="411"/>
        <end position="416"/>
    </location>
    <ligand>
        <name>ATP</name>
        <dbReference type="ChEBI" id="CHEBI:30616"/>
    </ligand>
</feature>
<feature type="binding site" evidence="1">
    <location>
        <position position="500"/>
    </location>
    <ligand>
        <name>ATP</name>
        <dbReference type="ChEBI" id="CHEBI:30616"/>
    </ligand>
</feature>
<feature type="binding site" evidence="1">
    <location>
        <position position="515"/>
    </location>
    <ligand>
        <name>ATP</name>
        <dbReference type="ChEBI" id="CHEBI:30616"/>
    </ligand>
</feature>
<feature type="binding site" evidence="1">
    <location>
        <position position="523"/>
    </location>
    <ligand>
        <name>CoA</name>
        <dbReference type="ChEBI" id="CHEBI:57287"/>
    </ligand>
</feature>
<feature type="binding site" evidence="1">
    <location>
        <position position="526"/>
    </location>
    <ligand>
        <name>ATP</name>
        <dbReference type="ChEBI" id="CHEBI:30616"/>
    </ligand>
</feature>
<feature type="binding site" evidence="1">
    <location>
        <position position="537"/>
    </location>
    <ligand>
        <name>Mg(2+)</name>
        <dbReference type="ChEBI" id="CHEBI:18420"/>
    </ligand>
</feature>
<feature type="binding site" evidence="1">
    <location>
        <position position="539"/>
    </location>
    <ligand>
        <name>Mg(2+)</name>
        <dbReference type="ChEBI" id="CHEBI:18420"/>
    </ligand>
</feature>
<feature type="binding site" evidence="1">
    <location>
        <position position="542"/>
    </location>
    <ligand>
        <name>Mg(2+)</name>
        <dbReference type="ChEBI" id="CHEBI:18420"/>
    </ligand>
</feature>
<feature type="binding site" evidence="1">
    <location>
        <position position="584"/>
    </location>
    <ligand>
        <name>CoA</name>
        <dbReference type="ChEBI" id="CHEBI:57287"/>
    </ligand>
</feature>
<feature type="modified residue" description="N6-acetyllysine" evidence="1">
    <location>
        <position position="609"/>
    </location>
</feature>
<protein>
    <recommendedName>
        <fullName evidence="1">Acetyl-coenzyme A synthetase 1</fullName>
        <shortName evidence="1">AcCoA synthetase 1</shortName>
        <shortName evidence="1">Acs 1</shortName>
        <ecNumber evidence="1">6.2.1.1</ecNumber>
    </recommendedName>
    <alternativeName>
        <fullName evidence="1">Acetate--CoA ligase 1</fullName>
    </alternativeName>
    <alternativeName>
        <fullName evidence="1">Acyl-activating enzyme 1</fullName>
    </alternativeName>
</protein>
<evidence type="ECO:0000255" key="1">
    <source>
        <dbReference type="HAMAP-Rule" id="MF_01123"/>
    </source>
</evidence>
<gene>
    <name evidence="1" type="primary">acsA1</name>
    <name type="ordered locus">PP_4487</name>
</gene>
<comment type="function">
    <text evidence="1">Catalyzes the conversion of acetate into acetyl-CoA (AcCoA), an essential intermediate at the junction of anabolic and catabolic pathways. AcsA undergoes a two-step reaction. In the first half reaction, AcsA combines acetate with ATP to form acetyl-adenylate (AcAMP) intermediate. In the second half reaction, it can then transfer the acetyl group from AcAMP to the sulfhydryl group of CoA, forming the product AcCoA.</text>
</comment>
<comment type="catalytic activity">
    <reaction evidence="1">
        <text>acetate + ATP + CoA = acetyl-CoA + AMP + diphosphate</text>
        <dbReference type="Rhea" id="RHEA:23176"/>
        <dbReference type="ChEBI" id="CHEBI:30089"/>
        <dbReference type="ChEBI" id="CHEBI:30616"/>
        <dbReference type="ChEBI" id="CHEBI:33019"/>
        <dbReference type="ChEBI" id="CHEBI:57287"/>
        <dbReference type="ChEBI" id="CHEBI:57288"/>
        <dbReference type="ChEBI" id="CHEBI:456215"/>
        <dbReference type="EC" id="6.2.1.1"/>
    </reaction>
</comment>
<comment type="cofactor">
    <cofactor evidence="1">
        <name>Mg(2+)</name>
        <dbReference type="ChEBI" id="CHEBI:18420"/>
    </cofactor>
</comment>
<comment type="PTM">
    <text evidence="1">Acetylated. Deacetylation by the SIR2-homolog deacetylase activates the enzyme.</text>
</comment>
<comment type="similarity">
    <text evidence="1">Belongs to the ATP-dependent AMP-binding enzyme family.</text>
</comment>
<reference key="1">
    <citation type="journal article" date="2002" name="Environ. Microbiol.">
        <title>Complete genome sequence and comparative analysis of the metabolically versatile Pseudomonas putida KT2440.</title>
        <authorList>
            <person name="Nelson K.E."/>
            <person name="Weinel C."/>
            <person name="Paulsen I.T."/>
            <person name="Dodson R.J."/>
            <person name="Hilbert H."/>
            <person name="Martins dos Santos V.A.P."/>
            <person name="Fouts D.E."/>
            <person name="Gill S.R."/>
            <person name="Pop M."/>
            <person name="Holmes M."/>
            <person name="Brinkac L.M."/>
            <person name="Beanan M.J."/>
            <person name="DeBoy R.T."/>
            <person name="Daugherty S.C."/>
            <person name="Kolonay J.F."/>
            <person name="Madupu R."/>
            <person name="Nelson W.C."/>
            <person name="White O."/>
            <person name="Peterson J.D."/>
            <person name="Khouri H.M."/>
            <person name="Hance I."/>
            <person name="Chris Lee P."/>
            <person name="Holtzapple E.K."/>
            <person name="Scanlan D."/>
            <person name="Tran K."/>
            <person name="Moazzez A."/>
            <person name="Utterback T.R."/>
            <person name="Rizzo M."/>
            <person name="Lee K."/>
            <person name="Kosack D."/>
            <person name="Moestl D."/>
            <person name="Wedler H."/>
            <person name="Lauber J."/>
            <person name="Stjepandic D."/>
            <person name="Hoheisel J."/>
            <person name="Straetz M."/>
            <person name="Heim S."/>
            <person name="Kiewitz C."/>
            <person name="Eisen J.A."/>
            <person name="Timmis K.N."/>
            <person name="Duesterhoeft A."/>
            <person name="Tuemmler B."/>
            <person name="Fraser C.M."/>
        </authorList>
    </citation>
    <scope>NUCLEOTIDE SEQUENCE [LARGE SCALE GENOMIC DNA]</scope>
    <source>
        <strain>ATCC 47054 / DSM 6125 / CFBP 8728 / NCIMB 11950 / KT2440</strain>
    </source>
</reference>
<name>ACSA1_PSEPK</name>
<proteinExistence type="inferred from homology"/>
<sequence length="653" mass="71797">MSAAPLYPVRPEVAATTLTDEATYKAMYQQSVINPDGFWREQAQRIDWIKPFTKVKQTSFDDHHVDIKWFADGTLNVSSNCLDRHLEERGDQLAIIWEGDDPSEHRNITYRELHEQVCKFANALRGQDVHRGDVVTIYMPMIPEAVVAMLACARIGAIHSVVFGGFSPEALAGRIIDCKSKVVITADEGVRGGRRTPLKANVDLALTNPETSSVQKIIVCKRTGGDIAWHQHRDIWYEDLMKVASSHCAPKEMGAEEALFILYTSGSTGKPKGVLHTTGGYLVYAALTHERVFDYRPGEVYWCTADVGWVTGHSYIVYGPLANGATTLLFEGVPNYPDITRVSKIVDKHKVNILYTAPTAIRAMMAEGQAAVEGADGSSLRLLGSVGEPINPEAWNWYYKTVGKERCPIVDTWWQTETGGILISPLPGATGLKPGSATRPFFGVVPALVDNLGNLIDGAAEGNLVILDSWPGQSRSLYGDHDRFVDTYFKTFRGMYFTGDGARRDEDGYYWITGRVDDVLNVSGHRMGTAEIESAMVAHSKVAEAAVVGVPHDIKGQGIYVYVTLNAGIEASEQLRLELKNWVRKEIGPIASPDVIQWAPGLPKTRSGKIMRRILRKIATGEYDALGDISTLADPGVVQHLIDTHKAMNLASA</sequence>
<dbReference type="EC" id="6.2.1.1" evidence="1"/>
<dbReference type="EMBL" id="AE015451">
    <property type="protein sequence ID" value="AAN70062.1"/>
    <property type="molecule type" value="Genomic_DNA"/>
</dbReference>
<dbReference type="RefSeq" id="NP_746598.2">
    <property type="nucleotide sequence ID" value="NC_002947.4"/>
</dbReference>
<dbReference type="SMR" id="Q88EH6"/>
<dbReference type="STRING" id="160488.PP_4487"/>
<dbReference type="PaxDb" id="160488-PP_4487"/>
<dbReference type="KEGG" id="ppu:PP_4487"/>
<dbReference type="PATRIC" id="fig|160488.4.peg.4775"/>
<dbReference type="eggNOG" id="COG0365">
    <property type="taxonomic scope" value="Bacteria"/>
</dbReference>
<dbReference type="HOGENOM" id="CLU_000022_3_6_6"/>
<dbReference type="OrthoDB" id="9803968at2"/>
<dbReference type="PhylomeDB" id="Q88EH6"/>
<dbReference type="Proteomes" id="UP000000556">
    <property type="component" value="Chromosome"/>
</dbReference>
<dbReference type="GO" id="GO:0005829">
    <property type="term" value="C:cytosol"/>
    <property type="evidence" value="ECO:0007669"/>
    <property type="project" value="TreeGrafter"/>
</dbReference>
<dbReference type="GO" id="GO:0003987">
    <property type="term" value="F:acetate-CoA ligase activity"/>
    <property type="evidence" value="ECO:0007669"/>
    <property type="project" value="UniProtKB-UniRule"/>
</dbReference>
<dbReference type="GO" id="GO:0016208">
    <property type="term" value="F:AMP binding"/>
    <property type="evidence" value="ECO:0007669"/>
    <property type="project" value="InterPro"/>
</dbReference>
<dbReference type="GO" id="GO:0005524">
    <property type="term" value="F:ATP binding"/>
    <property type="evidence" value="ECO:0007669"/>
    <property type="project" value="UniProtKB-KW"/>
</dbReference>
<dbReference type="GO" id="GO:0046872">
    <property type="term" value="F:metal ion binding"/>
    <property type="evidence" value="ECO:0007669"/>
    <property type="project" value="UniProtKB-KW"/>
</dbReference>
<dbReference type="GO" id="GO:0019427">
    <property type="term" value="P:acetyl-CoA biosynthetic process from acetate"/>
    <property type="evidence" value="ECO:0007669"/>
    <property type="project" value="InterPro"/>
</dbReference>
<dbReference type="CDD" id="cd05966">
    <property type="entry name" value="ACS"/>
    <property type="match status" value="1"/>
</dbReference>
<dbReference type="FunFam" id="3.30.300.30:FF:000004">
    <property type="entry name" value="Acetyl-coenzyme A synthetase"/>
    <property type="match status" value="1"/>
</dbReference>
<dbReference type="FunFam" id="3.40.50.12780:FF:000001">
    <property type="entry name" value="Acetyl-coenzyme A synthetase"/>
    <property type="match status" value="1"/>
</dbReference>
<dbReference type="Gene3D" id="3.30.300.30">
    <property type="match status" value="1"/>
</dbReference>
<dbReference type="Gene3D" id="3.40.50.12780">
    <property type="entry name" value="N-terminal domain of ligase-like"/>
    <property type="match status" value="1"/>
</dbReference>
<dbReference type="HAMAP" id="MF_01123">
    <property type="entry name" value="Ac_CoA_synth"/>
    <property type="match status" value="1"/>
</dbReference>
<dbReference type="InterPro" id="IPR011904">
    <property type="entry name" value="Ac_CoA_lig"/>
</dbReference>
<dbReference type="InterPro" id="IPR032387">
    <property type="entry name" value="ACAS_N"/>
</dbReference>
<dbReference type="InterPro" id="IPR025110">
    <property type="entry name" value="AMP-bd_C"/>
</dbReference>
<dbReference type="InterPro" id="IPR045851">
    <property type="entry name" value="AMP-bd_C_sf"/>
</dbReference>
<dbReference type="InterPro" id="IPR020845">
    <property type="entry name" value="AMP-binding_CS"/>
</dbReference>
<dbReference type="InterPro" id="IPR000873">
    <property type="entry name" value="AMP-dep_synth/lig_dom"/>
</dbReference>
<dbReference type="InterPro" id="IPR042099">
    <property type="entry name" value="ANL_N_sf"/>
</dbReference>
<dbReference type="NCBIfam" id="TIGR02188">
    <property type="entry name" value="Ac_CoA_lig_AcsA"/>
    <property type="match status" value="1"/>
</dbReference>
<dbReference type="NCBIfam" id="NF001208">
    <property type="entry name" value="PRK00174.1"/>
    <property type="match status" value="1"/>
</dbReference>
<dbReference type="PANTHER" id="PTHR24095">
    <property type="entry name" value="ACETYL-COENZYME A SYNTHETASE"/>
    <property type="match status" value="1"/>
</dbReference>
<dbReference type="PANTHER" id="PTHR24095:SF243">
    <property type="entry name" value="ACETYL-COENZYME A SYNTHETASE"/>
    <property type="match status" value="1"/>
</dbReference>
<dbReference type="Pfam" id="PF16177">
    <property type="entry name" value="ACAS_N"/>
    <property type="match status" value="1"/>
</dbReference>
<dbReference type="Pfam" id="PF00501">
    <property type="entry name" value="AMP-binding"/>
    <property type="match status" value="1"/>
</dbReference>
<dbReference type="Pfam" id="PF13193">
    <property type="entry name" value="AMP-binding_C"/>
    <property type="match status" value="1"/>
</dbReference>
<dbReference type="SUPFAM" id="SSF56801">
    <property type="entry name" value="Acetyl-CoA synthetase-like"/>
    <property type="match status" value="1"/>
</dbReference>
<dbReference type="PROSITE" id="PS00455">
    <property type="entry name" value="AMP_BINDING"/>
    <property type="match status" value="1"/>
</dbReference>
<organism>
    <name type="scientific">Pseudomonas putida (strain ATCC 47054 / DSM 6125 / CFBP 8728 / NCIMB 11950 / KT2440)</name>
    <dbReference type="NCBI Taxonomy" id="160488"/>
    <lineage>
        <taxon>Bacteria</taxon>
        <taxon>Pseudomonadati</taxon>
        <taxon>Pseudomonadota</taxon>
        <taxon>Gammaproteobacteria</taxon>
        <taxon>Pseudomonadales</taxon>
        <taxon>Pseudomonadaceae</taxon>
        <taxon>Pseudomonas</taxon>
    </lineage>
</organism>
<accession>Q88EH6</accession>